<organism>
    <name type="scientific">Xylella fastidiosa (strain Temecula1 / ATCC 700964)</name>
    <dbReference type="NCBI Taxonomy" id="183190"/>
    <lineage>
        <taxon>Bacteria</taxon>
        <taxon>Pseudomonadati</taxon>
        <taxon>Pseudomonadota</taxon>
        <taxon>Gammaproteobacteria</taxon>
        <taxon>Lysobacterales</taxon>
        <taxon>Lysobacteraceae</taxon>
        <taxon>Xylella</taxon>
    </lineage>
</organism>
<feature type="chain" id="PRO_0000125268" description="Large ribosomal subunit protein uL22">
    <location>
        <begin position="1"/>
        <end position="111"/>
    </location>
</feature>
<name>RL22_XYLFT</name>
<protein>
    <recommendedName>
        <fullName evidence="1">Large ribosomal subunit protein uL22</fullName>
    </recommendedName>
    <alternativeName>
        <fullName evidence="2">50S ribosomal protein L22</fullName>
    </alternativeName>
</protein>
<evidence type="ECO:0000255" key="1">
    <source>
        <dbReference type="HAMAP-Rule" id="MF_01331"/>
    </source>
</evidence>
<evidence type="ECO:0000305" key="2"/>
<gene>
    <name evidence="1" type="primary">rplV</name>
    <name type="ordered locus">PD_0442</name>
</gene>
<proteinExistence type="inferred from homology"/>
<dbReference type="EMBL" id="AE009442">
    <property type="protein sequence ID" value="AAO28321.1"/>
    <property type="molecule type" value="Genomic_DNA"/>
</dbReference>
<dbReference type="RefSeq" id="WP_011097648.1">
    <property type="nucleotide sequence ID" value="NC_004556.1"/>
</dbReference>
<dbReference type="SMR" id="Q87E77"/>
<dbReference type="GeneID" id="93904144"/>
<dbReference type="KEGG" id="xft:PD_0442"/>
<dbReference type="HOGENOM" id="CLU_083987_3_3_6"/>
<dbReference type="Proteomes" id="UP000002516">
    <property type="component" value="Chromosome"/>
</dbReference>
<dbReference type="GO" id="GO:0022625">
    <property type="term" value="C:cytosolic large ribosomal subunit"/>
    <property type="evidence" value="ECO:0007669"/>
    <property type="project" value="TreeGrafter"/>
</dbReference>
<dbReference type="GO" id="GO:0019843">
    <property type="term" value="F:rRNA binding"/>
    <property type="evidence" value="ECO:0007669"/>
    <property type="project" value="UniProtKB-UniRule"/>
</dbReference>
<dbReference type="GO" id="GO:0003735">
    <property type="term" value="F:structural constituent of ribosome"/>
    <property type="evidence" value="ECO:0007669"/>
    <property type="project" value="InterPro"/>
</dbReference>
<dbReference type="GO" id="GO:0006412">
    <property type="term" value="P:translation"/>
    <property type="evidence" value="ECO:0007669"/>
    <property type="project" value="UniProtKB-UniRule"/>
</dbReference>
<dbReference type="CDD" id="cd00336">
    <property type="entry name" value="Ribosomal_L22"/>
    <property type="match status" value="1"/>
</dbReference>
<dbReference type="FunFam" id="3.90.470.10:FF:000001">
    <property type="entry name" value="50S ribosomal protein L22"/>
    <property type="match status" value="1"/>
</dbReference>
<dbReference type="Gene3D" id="3.90.470.10">
    <property type="entry name" value="Ribosomal protein L22/L17"/>
    <property type="match status" value="1"/>
</dbReference>
<dbReference type="HAMAP" id="MF_01331_B">
    <property type="entry name" value="Ribosomal_uL22_B"/>
    <property type="match status" value="1"/>
</dbReference>
<dbReference type="InterPro" id="IPR001063">
    <property type="entry name" value="Ribosomal_uL22"/>
</dbReference>
<dbReference type="InterPro" id="IPR005727">
    <property type="entry name" value="Ribosomal_uL22_bac/chlpt-type"/>
</dbReference>
<dbReference type="InterPro" id="IPR047867">
    <property type="entry name" value="Ribosomal_uL22_bac/org-type"/>
</dbReference>
<dbReference type="InterPro" id="IPR018260">
    <property type="entry name" value="Ribosomal_uL22_CS"/>
</dbReference>
<dbReference type="InterPro" id="IPR036394">
    <property type="entry name" value="Ribosomal_uL22_sf"/>
</dbReference>
<dbReference type="NCBIfam" id="TIGR01044">
    <property type="entry name" value="rplV_bact"/>
    <property type="match status" value="1"/>
</dbReference>
<dbReference type="PANTHER" id="PTHR13501">
    <property type="entry name" value="CHLOROPLAST 50S RIBOSOMAL PROTEIN L22-RELATED"/>
    <property type="match status" value="1"/>
</dbReference>
<dbReference type="PANTHER" id="PTHR13501:SF8">
    <property type="entry name" value="LARGE RIBOSOMAL SUBUNIT PROTEIN UL22M"/>
    <property type="match status" value="1"/>
</dbReference>
<dbReference type="Pfam" id="PF00237">
    <property type="entry name" value="Ribosomal_L22"/>
    <property type="match status" value="1"/>
</dbReference>
<dbReference type="SUPFAM" id="SSF54843">
    <property type="entry name" value="Ribosomal protein L22"/>
    <property type="match status" value="1"/>
</dbReference>
<dbReference type="PROSITE" id="PS00464">
    <property type="entry name" value="RIBOSOMAL_L22"/>
    <property type="match status" value="1"/>
</dbReference>
<keyword id="KW-1185">Reference proteome</keyword>
<keyword id="KW-0687">Ribonucleoprotein</keyword>
<keyword id="KW-0689">Ribosomal protein</keyword>
<keyword id="KW-0694">RNA-binding</keyword>
<keyword id="KW-0699">rRNA-binding</keyword>
<comment type="function">
    <text evidence="1">This protein binds specifically to 23S rRNA; its binding is stimulated by other ribosomal proteins, e.g. L4, L17, and L20. It is important during the early stages of 50S assembly. It makes multiple contacts with different domains of the 23S rRNA in the assembled 50S subunit and ribosome (By similarity).</text>
</comment>
<comment type="function">
    <text evidence="1">The globular domain of the protein is located near the polypeptide exit tunnel on the outside of the subunit, while an extended beta-hairpin is found that lines the wall of the exit tunnel in the center of the 70S ribosome.</text>
</comment>
<comment type="subunit">
    <text evidence="1">Part of the 50S ribosomal subunit.</text>
</comment>
<comment type="similarity">
    <text evidence="1">Belongs to the universal ribosomal protein uL22 family.</text>
</comment>
<sequence length="111" mass="11964">MEASAILRGARVSPQKARLVAAQVRGLSADSAVNLLRFSSKKAACLIKKVVESAIANAENNHGSNIDDLRINTIIVDEGRMLKRFMARAKGRSSRIVKRSSHITVVVGPAK</sequence>
<reference key="1">
    <citation type="journal article" date="2003" name="J. Bacteriol.">
        <title>Comparative analyses of the complete genome sequences of Pierce's disease and citrus variegated chlorosis strains of Xylella fastidiosa.</title>
        <authorList>
            <person name="Van Sluys M.A."/>
            <person name="de Oliveira M.C."/>
            <person name="Monteiro-Vitorello C.B."/>
            <person name="Miyaki C.Y."/>
            <person name="Furlan L.R."/>
            <person name="Camargo L.E.A."/>
            <person name="da Silva A.C.R."/>
            <person name="Moon D.H."/>
            <person name="Takita M.A."/>
            <person name="Lemos E.G.M."/>
            <person name="Machado M.A."/>
            <person name="Ferro M.I.T."/>
            <person name="da Silva F.R."/>
            <person name="Goldman M.H.S."/>
            <person name="Goldman G.H."/>
            <person name="Lemos M.V.F."/>
            <person name="El-Dorry H."/>
            <person name="Tsai S.M."/>
            <person name="Carrer H."/>
            <person name="Carraro D.M."/>
            <person name="de Oliveira R.C."/>
            <person name="Nunes L.R."/>
            <person name="Siqueira W.J."/>
            <person name="Coutinho L.L."/>
            <person name="Kimura E.T."/>
            <person name="Ferro E.S."/>
            <person name="Harakava R."/>
            <person name="Kuramae E.E."/>
            <person name="Marino C.L."/>
            <person name="Giglioti E."/>
            <person name="Abreu I.L."/>
            <person name="Alves L.M.C."/>
            <person name="do Amaral A.M."/>
            <person name="Baia G.S."/>
            <person name="Blanco S.R."/>
            <person name="Brito M.S."/>
            <person name="Cannavan F.S."/>
            <person name="Celestino A.V."/>
            <person name="da Cunha A.F."/>
            <person name="Fenille R.C."/>
            <person name="Ferro J.A."/>
            <person name="Formighieri E.F."/>
            <person name="Kishi L.T."/>
            <person name="Leoni S.G."/>
            <person name="Oliveira A.R."/>
            <person name="Rosa V.E. Jr."/>
            <person name="Sassaki F.T."/>
            <person name="Sena J.A.D."/>
            <person name="de Souza A.A."/>
            <person name="Truffi D."/>
            <person name="Tsukumo F."/>
            <person name="Yanai G.M."/>
            <person name="Zaros L.G."/>
            <person name="Civerolo E.L."/>
            <person name="Simpson A.J.G."/>
            <person name="Almeida N.F. Jr."/>
            <person name="Setubal J.C."/>
            <person name="Kitajima J.P."/>
        </authorList>
    </citation>
    <scope>NUCLEOTIDE SEQUENCE [LARGE SCALE GENOMIC DNA]</scope>
    <source>
        <strain>Temecula1 / ATCC 700964</strain>
    </source>
</reference>
<accession>Q87E77</accession>